<sequence length="590" mass="67408">MYYTSGNYEAFATPRKPEGVDQKSAYIVGTGLAGLAAAVFLIRDGHMAGERIHLFEELPLAGGSLDGIEKPHLGFVTRGGREMENHFECMWDMYRSIPSLEIPGASYLDEFYWLDKDDPNSSNCRLIHKRGNRVDDDGQYTLGKQSKELIHLIMKTEESLGDQTIEEFFSEDFFKSNFWVYWATMFAFEKWHSAVEMRRYAMRFIHHIDGLPDFTSLKFNKYNQYDSMVKPIIAYLESHDVDIQFDTKVTDIQVEQTAGKKVAKTIHMTVSGEAKAIELTPDDLVFVTNGSITESSTYGSHHEVAKPTKALGGSWNLWENLAAQSDDFGHPKVFYQDLPAESWFVSATATIKHPAIEPYIERLTHRDLHDGKVNTGGIITITDSNWMMSFAIHRQPHFKEQKENETTVWIYGLYSNSEGNYVHKKIEECTGQEITEEWLYHLGVPVDKIKDLASQEYINTVPVYMPYITSYFMPRVKGDRPKVIPDGSVNLAFIGNFAESPSRDTVFTTEYSIRTAMEAVYSFLNGERGIPQGFNSAYDIRELLKAFYYLNDKKAIKDMDLPIPALIEKIGHKKIKDTFIEELLKDANLM</sequence>
<protein>
    <recommendedName>
        <fullName evidence="5">Oleate hydratase</fullName>
        <ecNumber evidence="5">4.2.1.53</ecNumber>
    </recommendedName>
    <alternativeName>
        <fullName evidence="3">Fatty acid double bond hydratase</fullName>
    </alternativeName>
    <alternativeName>
        <fullName>Fatty acid hydratase</fullName>
    </alternativeName>
    <alternativeName>
        <fullName>Linoleate hydratase</fullName>
    </alternativeName>
    <alternativeName>
        <fullName evidence="3">Myosin cross-reactive antigen</fullName>
        <shortName evidence="3">MCRA</shortName>
    </alternativeName>
</protein>
<reference key="1">
    <citation type="journal article" date="2008" name="J. Bacteriol.">
        <title>Genome sequence of a nephritogenic and highly transformable M49 strain of Streptococcus pyogenes.</title>
        <authorList>
            <person name="McShan W.M."/>
            <person name="Ferretti J.J."/>
            <person name="Karasawa T."/>
            <person name="Suvorov A.N."/>
            <person name="Lin S."/>
            <person name="Qin B."/>
            <person name="Jia H."/>
            <person name="Kenton S."/>
            <person name="Najar F."/>
            <person name="Wu H."/>
            <person name="Scott J."/>
            <person name="Roe B.A."/>
            <person name="Savic D.J."/>
        </authorList>
    </citation>
    <scope>NUCLEOTIDE SEQUENCE [LARGE SCALE GENOMIC DNA]</scope>
    <source>
        <strain>NZ131</strain>
    </source>
</reference>
<reference key="2">
    <citation type="journal article" date="2010" name="J. Biol. Chem.">
        <title>Myosin cross-reactive antigen of Streptococcus pyogenes M49 encodes a fatty acid double bond hydratase that plays a role in oleic acid detoxification and bacterial virulence.</title>
        <authorList>
            <person name="Volkov A."/>
            <person name="Liavonchanka A."/>
            <person name="Kamneva O."/>
            <person name="Fiedler T."/>
            <person name="Goebel C."/>
            <person name="Kreikemeyer B."/>
            <person name="Feussner I."/>
        </authorList>
    </citation>
    <scope>FUNCTION</scope>
    <scope>CATALYTIC ACTIVITY</scope>
    <scope>SUBSTRATE SPECIFICITY</scope>
    <scope>COFACTOR</scope>
    <scope>KINETIC PARAMETERS</scope>
    <scope>DISRUPTION PHENOTYPE</scope>
    <scope>SUBUNIT</scope>
    <source>
        <strain>591</strain>
    </source>
</reference>
<accession>B5XK69</accession>
<feature type="chain" id="PRO_0000416455" description="Oleate hydratase">
    <location>
        <begin position="1"/>
        <end position="590"/>
    </location>
</feature>
<feature type="active site" description="Proton acceptor" evidence="1">
    <location>
        <position position="82"/>
    </location>
</feature>
<feature type="active site" description="Proton donor" evidence="1">
    <location>
        <position position="200"/>
    </location>
</feature>
<feature type="binding site" evidence="1">
    <location>
        <position position="33"/>
    </location>
    <ligand>
        <name>FAD</name>
        <dbReference type="ChEBI" id="CHEBI:57692"/>
    </ligand>
</feature>
<feature type="binding site" evidence="1">
    <location>
        <position position="56"/>
    </location>
    <ligand>
        <name>FAD</name>
        <dbReference type="ChEBI" id="CHEBI:57692"/>
    </ligand>
</feature>
<feature type="binding site" evidence="1">
    <location>
        <position position="64"/>
    </location>
    <ligand>
        <name>FAD</name>
        <dbReference type="ChEBI" id="CHEBI:57692"/>
    </ligand>
</feature>
<feature type="binding site" evidence="1">
    <location>
        <position position="82"/>
    </location>
    <ligand>
        <name>FAD</name>
        <dbReference type="ChEBI" id="CHEBI:57692"/>
    </ligand>
</feature>
<feature type="binding site" evidence="1">
    <location>
        <position position="249"/>
    </location>
    <ligand>
        <name>FAD</name>
        <dbReference type="ChEBI" id="CHEBI:57692"/>
    </ligand>
</feature>
<feature type="binding site" evidence="1">
    <location>
        <position position="291"/>
    </location>
    <ligand>
        <name>FAD</name>
        <dbReference type="ChEBI" id="CHEBI:57692"/>
    </ligand>
</feature>
<feature type="binding site" evidence="1">
    <location>
        <position position="508"/>
    </location>
    <ligand>
        <name>FAD</name>
        <dbReference type="ChEBI" id="CHEBI:57692"/>
    </ligand>
</feature>
<feature type="binding site" evidence="1">
    <location>
        <position position="512"/>
    </location>
    <ligand>
        <name>FAD</name>
        <dbReference type="ChEBI" id="CHEBI:57692"/>
    </ligand>
</feature>
<dbReference type="EC" id="4.2.1.53" evidence="5"/>
<dbReference type="EMBL" id="CP000829">
    <property type="protein sequence ID" value="ACI60731.1"/>
    <property type="status" value="ALT_INIT"/>
    <property type="molecule type" value="Genomic_DNA"/>
</dbReference>
<dbReference type="SMR" id="B5XK69"/>
<dbReference type="KEGG" id="soz:Spy49_0398"/>
<dbReference type="HOGENOM" id="CLU_024043_2_0_9"/>
<dbReference type="BRENDA" id="4.2.1.53">
    <property type="organism ID" value="5935"/>
</dbReference>
<dbReference type="UniPathway" id="UPA00199"/>
<dbReference type="Proteomes" id="UP000001039">
    <property type="component" value="Chromosome"/>
</dbReference>
<dbReference type="GO" id="GO:0071949">
    <property type="term" value="F:FAD binding"/>
    <property type="evidence" value="ECO:0000314"/>
    <property type="project" value="UniProtKB"/>
</dbReference>
<dbReference type="GO" id="GO:0005504">
    <property type="term" value="F:fatty acid binding"/>
    <property type="evidence" value="ECO:0000314"/>
    <property type="project" value="UniProtKB"/>
</dbReference>
<dbReference type="GO" id="GO:0050151">
    <property type="term" value="F:oleate hydratase activity"/>
    <property type="evidence" value="ECO:0000314"/>
    <property type="project" value="UniProtKB"/>
</dbReference>
<dbReference type="GO" id="GO:0042803">
    <property type="term" value="F:protein homodimerization activity"/>
    <property type="evidence" value="ECO:0000314"/>
    <property type="project" value="UniProtKB"/>
</dbReference>
<dbReference type="GO" id="GO:0006631">
    <property type="term" value="P:fatty acid metabolic process"/>
    <property type="evidence" value="ECO:0000314"/>
    <property type="project" value="UniProtKB"/>
</dbReference>
<dbReference type="GO" id="GO:0009636">
    <property type="term" value="P:response to toxic substance"/>
    <property type="evidence" value="ECO:0007669"/>
    <property type="project" value="UniProtKB-KW"/>
</dbReference>
<dbReference type="FunFam" id="3.50.50.60:FF:000990">
    <property type="entry name" value="67 kDa Myosin-crossreactive antigen"/>
    <property type="match status" value="1"/>
</dbReference>
<dbReference type="Gene3D" id="3.50.50.60">
    <property type="entry name" value="FAD/NAD(P)-binding domain"/>
    <property type="match status" value="3"/>
</dbReference>
<dbReference type="InterPro" id="IPR036188">
    <property type="entry name" value="FAD/NAD-bd_sf"/>
</dbReference>
<dbReference type="InterPro" id="IPR010354">
    <property type="entry name" value="Oleate_hydratase"/>
</dbReference>
<dbReference type="NCBIfam" id="NF010584">
    <property type="entry name" value="PRK13977.1"/>
    <property type="match status" value="1"/>
</dbReference>
<dbReference type="PANTHER" id="PTHR37417">
    <property type="entry name" value="67 KDA MYOSIN-CROSS-REACTIVE ANTIGEN FAMILY PROTEIN (AFU_ORTHOLOGUE AFUA_5G09970)"/>
    <property type="match status" value="1"/>
</dbReference>
<dbReference type="PANTHER" id="PTHR37417:SF3">
    <property type="entry name" value="MYOSIN-CROSSREACTIVE PROTEIN"/>
    <property type="match status" value="1"/>
</dbReference>
<dbReference type="Pfam" id="PF06100">
    <property type="entry name" value="MCRA"/>
    <property type="match status" value="1"/>
</dbReference>
<dbReference type="SUPFAM" id="SSF51905">
    <property type="entry name" value="FAD/NAD(P)-binding domain"/>
    <property type="match status" value="1"/>
</dbReference>
<evidence type="ECO:0000250" key="1">
    <source>
        <dbReference type="UniProtKB" id="C7DLJ6"/>
    </source>
</evidence>
<evidence type="ECO:0000269" key="2">
    <source>
    </source>
</evidence>
<evidence type="ECO:0000303" key="3">
    <source>
    </source>
</evidence>
<evidence type="ECO:0000305" key="4"/>
<evidence type="ECO:0000305" key="5">
    <source>
    </source>
</evidence>
<keyword id="KW-0216">Detoxification</keyword>
<keyword id="KW-0274">FAD</keyword>
<keyword id="KW-0276">Fatty acid metabolism</keyword>
<keyword id="KW-0285">Flavoprotein</keyword>
<keyword id="KW-0443">Lipid metabolism</keyword>
<keyword id="KW-0456">Lyase</keyword>
<name>OLHYD_STRPZ</name>
<proteinExistence type="evidence at protein level"/>
<gene>
    <name type="primary">sph</name>
    <name type="ordered locus">Spy49_0398</name>
</gene>
<organism>
    <name type="scientific">Streptococcus pyogenes serotype M49 (strain NZ131)</name>
    <dbReference type="NCBI Taxonomy" id="471876"/>
    <lineage>
        <taxon>Bacteria</taxon>
        <taxon>Bacillati</taxon>
        <taxon>Bacillota</taxon>
        <taxon>Bacilli</taxon>
        <taxon>Lactobacillales</taxon>
        <taxon>Streptococcaceae</taxon>
        <taxon>Streptococcus</taxon>
    </lineage>
</organism>
<comment type="function">
    <text evidence="2">Catalyzes the hydration of oleate at its cis-9-double bond to yield 10-hydroxyoctadecanoate, probably in the (R) configuration, and of linoleate at its cis-9- and cis-12-double bond to yield 10-hydroxy-12-octadecenoate and 10,13-dihydroxyoctadecanoate. Is not active on trans-double bonds and esterified fatty acids as substrate; is only active on cis-9- and/or cis-12-double bond of C16 and C18 fatty acids without any trans-configurations, producing 10-hydroxy and 10,13-dihydroxy derivatives. Appears to play a role in oleic acid detoxification and bacterial virulence.</text>
</comment>
<comment type="catalytic activity">
    <reaction evidence="5">
        <text>(R)-10-hydroxyoctadecanoate = (9Z)-octadecenoate + H2O</text>
        <dbReference type="Rhea" id="RHEA:21852"/>
        <dbReference type="ChEBI" id="CHEBI:15377"/>
        <dbReference type="ChEBI" id="CHEBI:15683"/>
        <dbReference type="ChEBI" id="CHEBI:30823"/>
        <dbReference type="EC" id="4.2.1.53"/>
    </reaction>
    <physiologicalReaction direction="right-to-left" evidence="5">
        <dbReference type="Rhea" id="RHEA:21854"/>
    </physiologicalReaction>
</comment>
<comment type="catalytic activity">
    <reaction evidence="2">
        <text>(9Z)-octadecenoate + H2O = 10-hydroxyoctadecanoate</text>
        <dbReference type="Rhea" id="RHEA:75751"/>
        <dbReference type="ChEBI" id="CHEBI:15377"/>
        <dbReference type="ChEBI" id="CHEBI:30823"/>
        <dbReference type="ChEBI" id="CHEBI:143089"/>
    </reaction>
    <physiologicalReaction direction="left-to-right" evidence="5">
        <dbReference type="Rhea" id="RHEA:75752"/>
    </physiologicalReaction>
</comment>
<comment type="catalytic activity">
    <reaction evidence="2">
        <text>(9Z)-hexadecenoate + H2O = 10-hydroxyhexadecanoate</text>
        <dbReference type="Rhea" id="RHEA:75767"/>
        <dbReference type="ChEBI" id="CHEBI:15377"/>
        <dbReference type="ChEBI" id="CHEBI:32372"/>
        <dbReference type="ChEBI" id="CHEBI:194446"/>
    </reaction>
    <physiologicalReaction direction="left-to-right" evidence="5">
        <dbReference type="Rhea" id="RHEA:75768"/>
    </physiologicalReaction>
</comment>
<comment type="catalytic activity">
    <reaction evidence="2">
        <text>(9Z,12Z)-octadecadienoate + H2O = (12Z)-10-hydroxyoctadecenoate</text>
        <dbReference type="Rhea" id="RHEA:76599"/>
        <dbReference type="ChEBI" id="CHEBI:15377"/>
        <dbReference type="ChEBI" id="CHEBI:30245"/>
        <dbReference type="ChEBI" id="CHEBI:195300"/>
    </reaction>
    <physiologicalReaction direction="left-to-right" evidence="5">
        <dbReference type="Rhea" id="RHEA:76600"/>
    </physiologicalReaction>
</comment>
<comment type="catalytic activity">
    <reaction evidence="2">
        <text>(12Z)-10-hydroxyoctadecenoate + H2O = 10,13-dihydroxyoctadecanoate</text>
        <dbReference type="Rhea" id="RHEA:76603"/>
        <dbReference type="ChEBI" id="CHEBI:15377"/>
        <dbReference type="ChEBI" id="CHEBI:195300"/>
        <dbReference type="ChEBI" id="CHEBI:195301"/>
    </reaction>
    <physiologicalReaction direction="left-to-right" evidence="5">
        <dbReference type="Rhea" id="RHEA:76604"/>
    </physiologicalReaction>
</comment>
<comment type="catalytic activity">
    <reaction evidence="2">
        <text>(9Z,12Z,15Z)-octadecatrienoate + H2O = (12Z,15Z)-10-hydroxyoctadecadienoate</text>
        <dbReference type="Rhea" id="RHEA:76607"/>
        <dbReference type="ChEBI" id="CHEBI:15377"/>
        <dbReference type="ChEBI" id="CHEBI:32387"/>
        <dbReference type="ChEBI" id="CHEBI:195302"/>
    </reaction>
    <physiologicalReaction direction="left-to-right" evidence="5">
        <dbReference type="Rhea" id="RHEA:76608"/>
    </physiologicalReaction>
</comment>
<comment type="cofactor">
    <cofactor evidence="2">
        <name>FAD</name>
        <dbReference type="ChEBI" id="CHEBI:57692"/>
    </cofactor>
    <text evidence="2">Binds 1 FAD per subunit. FAD does not seem to be involved in catalysis but rather in the structural stabilization of the enzyme.</text>
</comment>
<comment type="biophysicochemical properties">
    <kinetics>
        <KM evidence="2">63 uM for oleate</KM>
        <KM evidence="2">49 uM for linoleate</KM>
        <text>kcat is 67 min(-1) and 101 min(-1) with oleate and linoleate as substrate, respectively.</text>
    </kinetics>
</comment>
<comment type="pathway">
    <text>Lipid metabolism; fatty acid metabolism.</text>
</comment>
<comment type="subunit">
    <text evidence="2">Monomer and homodimer. Both forms seem to be active.</text>
</comment>
<comment type="disruption phenotype">
    <text evidence="2">In strain lacking this gene, consumption of the free fatty acids from the medium is reduced to about 50% of that of the wild-type. The mutant strain also appears to be 2-fold more sensitive to oleic acid than wild-type, whereas no changes in sensitivity to linoleic acid is observed. The mutant shows increased survival in blood with reduced adherence and internalization to human keratinocytes.</text>
</comment>
<comment type="miscellaneous">
    <text evidence="5">Unsaturated fatty acids are toxic for many bacteria due to deteriorating effect on bacterial cellular membrane and disruption of bacterial fatty acid synthesis. The hydration of unsaturated fatty acids is suggested to be a detoxification mechanism and a survival strategy for living in fatty acid-rich environments (PubMed:20145247).</text>
</comment>
<comment type="similarity">
    <text evidence="4">Belongs to the oleate hydratase family.</text>
</comment>
<comment type="sequence caution" evidence="4">
    <conflict type="erroneous initiation">
        <sequence resource="EMBL-CDS" id="ACI60731"/>
    </conflict>
    <text>Extended N-terminus.</text>
</comment>